<feature type="chain" id="PRO_0000156795" description="Protein YdeJ">
    <location>
        <begin position="1"/>
        <end position="172"/>
    </location>
</feature>
<gene>
    <name type="primary">ydeJ</name>
    <name type="ordered locus">b1537</name>
    <name type="ordered locus">JW1530</name>
</gene>
<name>YDEJ_ECOLI</name>
<proteinExistence type="inferred from homology"/>
<evidence type="ECO:0000305" key="1"/>
<protein>
    <recommendedName>
        <fullName>Protein YdeJ</fullName>
    </recommendedName>
</protein>
<dbReference type="EMBL" id="M96235">
    <property type="status" value="NOT_ANNOTATED_CDS"/>
    <property type="molecule type" value="Genomic_DNA"/>
</dbReference>
<dbReference type="EMBL" id="U00096">
    <property type="protein sequence ID" value="AAC74610.1"/>
    <property type="molecule type" value="Genomic_DNA"/>
</dbReference>
<dbReference type="EMBL" id="AP009048">
    <property type="protein sequence ID" value="BAA15227.1"/>
    <property type="molecule type" value="Genomic_DNA"/>
</dbReference>
<dbReference type="PIR" id="D64908">
    <property type="entry name" value="D64908"/>
</dbReference>
<dbReference type="RefSeq" id="NP_416055.1">
    <property type="nucleotide sequence ID" value="NC_000913.3"/>
</dbReference>
<dbReference type="RefSeq" id="WP_001024746.1">
    <property type="nucleotide sequence ID" value="NZ_SSZK01000001.1"/>
</dbReference>
<dbReference type="SMR" id="P31131"/>
<dbReference type="BioGRID" id="4260214">
    <property type="interactions" value="21"/>
</dbReference>
<dbReference type="FunCoup" id="P31131">
    <property type="interactions" value="18"/>
</dbReference>
<dbReference type="IntAct" id="P31131">
    <property type="interactions" value="6"/>
</dbReference>
<dbReference type="STRING" id="511145.b1537"/>
<dbReference type="jPOST" id="P31131"/>
<dbReference type="PaxDb" id="511145-b1537"/>
<dbReference type="EnsemblBacteria" id="AAC74610">
    <property type="protein sequence ID" value="AAC74610"/>
    <property type="gene ID" value="b1537"/>
</dbReference>
<dbReference type="GeneID" id="946067"/>
<dbReference type="KEGG" id="ecj:JW1530"/>
<dbReference type="KEGG" id="eco:b1537"/>
<dbReference type="KEGG" id="ecoc:C3026_08880"/>
<dbReference type="PATRIC" id="fig|511145.12.peg.1607"/>
<dbReference type="EchoBASE" id="EB1598"/>
<dbReference type="eggNOG" id="COG1546">
    <property type="taxonomic scope" value="Bacteria"/>
</dbReference>
<dbReference type="HOGENOM" id="CLU_030805_1_1_6"/>
<dbReference type="InParanoid" id="P31131"/>
<dbReference type="OMA" id="CFAWAFR"/>
<dbReference type="OrthoDB" id="9801454at2"/>
<dbReference type="PhylomeDB" id="P31131"/>
<dbReference type="BioCyc" id="EcoCyc:EG11645-MONOMER"/>
<dbReference type="PRO" id="PR:P31131"/>
<dbReference type="Proteomes" id="UP000000625">
    <property type="component" value="Chromosome"/>
</dbReference>
<dbReference type="Gene3D" id="3.90.950.20">
    <property type="entry name" value="CinA-like"/>
    <property type="match status" value="1"/>
</dbReference>
<dbReference type="InterPro" id="IPR036653">
    <property type="entry name" value="CinA-like_C"/>
</dbReference>
<dbReference type="InterPro" id="IPR008136">
    <property type="entry name" value="CinA_C"/>
</dbReference>
<dbReference type="NCBIfam" id="TIGR00199">
    <property type="entry name" value="PncC_domain"/>
    <property type="match status" value="1"/>
</dbReference>
<dbReference type="NCBIfam" id="NF002972">
    <property type="entry name" value="PRK03657.1"/>
    <property type="match status" value="1"/>
</dbReference>
<dbReference type="Pfam" id="PF02464">
    <property type="entry name" value="CinA"/>
    <property type="match status" value="1"/>
</dbReference>
<dbReference type="SUPFAM" id="SSF142433">
    <property type="entry name" value="CinA-like"/>
    <property type="match status" value="1"/>
</dbReference>
<sequence length="172" mass="18321">MNINRDKIVQLVDTDTIENLTSALSQRLIADQLRLTTAESCTGGKLASALCAAEDTPKFYGAGFVTFTDQAKMKILSVSQQSLERYSAVSEKVAAEMATGAIERADADVSIAITGYGGPEGGEDGTPAGTVWFAWHIKGQNYTAVMHFAGDCETVLALAVRFALAQLLQLLL</sequence>
<accession>P31131</accession>
<reference key="1">
    <citation type="journal article" date="1993" name="J. Bacteriol.">
        <title>Genetic and functional analysis of the multiple antibiotic resistance (mar) locus in Escherichia coli.</title>
        <authorList>
            <person name="Cohen S.P."/>
            <person name="Haechler H."/>
            <person name="Levy S.B."/>
        </authorList>
    </citation>
    <scope>NUCLEOTIDE SEQUENCE [GENOMIC DNA]</scope>
</reference>
<reference key="2">
    <citation type="journal article" date="1996" name="DNA Res.">
        <title>A 570-kb DNA sequence of the Escherichia coli K-12 genome corresponding to the 28.0-40.1 min region on the linkage map.</title>
        <authorList>
            <person name="Aiba H."/>
            <person name="Baba T."/>
            <person name="Fujita K."/>
            <person name="Hayashi K."/>
            <person name="Inada T."/>
            <person name="Isono K."/>
            <person name="Itoh T."/>
            <person name="Kasai H."/>
            <person name="Kashimoto K."/>
            <person name="Kimura S."/>
            <person name="Kitakawa M."/>
            <person name="Kitagawa M."/>
            <person name="Makino K."/>
            <person name="Miki T."/>
            <person name="Mizobuchi K."/>
            <person name="Mori H."/>
            <person name="Mori T."/>
            <person name="Motomura K."/>
            <person name="Nakade S."/>
            <person name="Nakamura Y."/>
            <person name="Nashimoto H."/>
            <person name="Nishio Y."/>
            <person name="Oshima T."/>
            <person name="Saito N."/>
            <person name="Sampei G."/>
            <person name="Seki Y."/>
            <person name="Sivasundaram S."/>
            <person name="Tagami H."/>
            <person name="Takeda J."/>
            <person name="Takemoto K."/>
            <person name="Takeuchi Y."/>
            <person name="Wada C."/>
            <person name="Yamamoto Y."/>
            <person name="Horiuchi T."/>
        </authorList>
    </citation>
    <scope>NUCLEOTIDE SEQUENCE [LARGE SCALE GENOMIC DNA]</scope>
    <source>
        <strain>K12 / W3110 / ATCC 27325 / DSM 5911</strain>
    </source>
</reference>
<reference key="3">
    <citation type="journal article" date="1997" name="Science">
        <title>The complete genome sequence of Escherichia coli K-12.</title>
        <authorList>
            <person name="Blattner F.R."/>
            <person name="Plunkett G. III"/>
            <person name="Bloch C.A."/>
            <person name="Perna N.T."/>
            <person name="Burland V."/>
            <person name="Riley M."/>
            <person name="Collado-Vides J."/>
            <person name="Glasner J.D."/>
            <person name="Rode C.K."/>
            <person name="Mayhew G.F."/>
            <person name="Gregor J."/>
            <person name="Davis N.W."/>
            <person name="Kirkpatrick H.A."/>
            <person name="Goeden M.A."/>
            <person name="Rose D.J."/>
            <person name="Mau B."/>
            <person name="Shao Y."/>
        </authorList>
    </citation>
    <scope>NUCLEOTIDE SEQUENCE [LARGE SCALE GENOMIC DNA]</scope>
    <source>
        <strain>K12 / MG1655 / ATCC 47076</strain>
    </source>
</reference>
<reference key="4">
    <citation type="journal article" date="2006" name="Mol. Syst. Biol.">
        <title>Highly accurate genome sequences of Escherichia coli K-12 strains MG1655 and W3110.</title>
        <authorList>
            <person name="Hayashi K."/>
            <person name="Morooka N."/>
            <person name="Yamamoto Y."/>
            <person name="Fujita K."/>
            <person name="Isono K."/>
            <person name="Choi S."/>
            <person name="Ohtsubo E."/>
            <person name="Baba T."/>
            <person name="Wanner B.L."/>
            <person name="Mori H."/>
            <person name="Horiuchi T."/>
        </authorList>
    </citation>
    <scope>NUCLEOTIDE SEQUENCE [LARGE SCALE GENOMIC DNA]</scope>
    <source>
        <strain>K12 / W3110 / ATCC 27325 / DSM 5911</strain>
    </source>
</reference>
<reference key="5">
    <citation type="journal article" date="2011" name="J. Biol. Chem.">
        <title>Identification of nicotinamide mononucleotide deamidase of the bacterial pyridine nucleotide cycle reveals a novel broadly conserved amidohydrolase family.</title>
        <authorList>
            <person name="Galeazzi L."/>
            <person name="Bocci P."/>
            <person name="Amici A."/>
            <person name="Brunetti L."/>
            <person name="Ruggieri S."/>
            <person name="Romine M."/>
            <person name="Reed S."/>
            <person name="Osterman A.L."/>
            <person name="Rodionov D.A."/>
            <person name="Sorci L."/>
            <person name="Raffaelli N."/>
        </authorList>
    </citation>
    <scope>ABSENCE OF NMN AMIDOHYDROLASE FUNCTION</scope>
    <source>
        <strain>K12</strain>
    </source>
</reference>
<comment type="function">
    <text>Does not have nicotinamide-nucleotide (NMN) amidohydrolase activity.</text>
</comment>
<comment type="similarity">
    <text evidence="1">Belongs to the CinA family.</text>
</comment>
<keyword id="KW-1185">Reference proteome</keyword>
<organism>
    <name type="scientific">Escherichia coli (strain K12)</name>
    <dbReference type="NCBI Taxonomy" id="83333"/>
    <lineage>
        <taxon>Bacteria</taxon>
        <taxon>Pseudomonadati</taxon>
        <taxon>Pseudomonadota</taxon>
        <taxon>Gammaproteobacteria</taxon>
        <taxon>Enterobacterales</taxon>
        <taxon>Enterobacteriaceae</taxon>
        <taxon>Escherichia</taxon>
    </lineage>
</organism>